<accession>Q81MW4</accession>
<accession>Q6HW29</accession>
<accession>Q6KQ84</accession>
<sequence>MVVLYTTASCASCRKAKAWLEENQIDYTEKNIVSNSMTVDELKSILRLTEEGATEIISTRSKTFQDLNINIEELSLNEFYKLIIEHPLMLRRPIMLDEKRLQIGFNDEEIRKFLPRSVRTFLNIELQKLAN</sequence>
<keyword id="KW-0963">Cytoplasm</keyword>
<keyword id="KW-1015">Disulfide bond</keyword>
<keyword id="KW-0676">Redox-active center</keyword>
<keyword id="KW-1185">Reference proteome</keyword>
<keyword id="KW-0804">Transcription</keyword>
<keyword id="KW-0805">Transcription regulation</keyword>
<protein>
    <recommendedName>
        <fullName evidence="1">Global transcriptional regulator Spx 2</fullName>
    </recommendedName>
</protein>
<name>SPX2_BACAN</name>
<comment type="function">
    <text evidence="1">Global transcriptional regulator that plays a key role in stress response and exerts either positive or negative regulation of genes. Acts by interacting with the C-terminal domain of the alpha subunit of the RNA polymerase (RNAP). This interaction can enhance binding of RNAP to the promoter region of target genes and stimulate their transcription, or block interaction of RNAP with activator.</text>
</comment>
<comment type="subunit">
    <text evidence="1">Interacts with the C-terminal domain of the alpha subunit of the RNAP.</text>
</comment>
<comment type="subcellular location">
    <subcellularLocation>
        <location evidence="1">Cytoplasm</location>
    </subcellularLocation>
</comment>
<comment type="similarity">
    <text evidence="1">Belongs to the ArsC family. Spx subfamily.</text>
</comment>
<evidence type="ECO:0000255" key="1">
    <source>
        <dbReference type="HAMAP-Rule" id="MF_01132"/>
    </source>
</evidence>
<proteinExistence type="inferred from homology"/>
<gene>
    <name evidence="1" type="primary">spx2</name>
    <name type="ordered locus">BA_3456</name>
    <name type="ordered locus">GBAA_3456</name>
    <name type="ordered locus">BAS3202</name>
</gene>
<reference key="1">
    <citation type="journal article" date="2003" name="Nature">
        <title>The genome sequence of Bacillus anthracis Ames and comparison to closely related bacteria.</title>
        <authorList>
            <person name="Read T.D."/>
            <person name="Peterson S.N."/>
            <person name="Tourasse N.J."/>
            <person name="Baillie L.W."/>
            <person name="Paulsen I.T."/>
            <person name="Nelson K.E."/>
            <person name="Tettelin H."/>
            <person name="Fouts D.E."/>
            <person name="Eisen J.A."/>
            <person name="Gill S.R."/>
            <person name="Holtzapple E.K."/>
            <person name="Okstad O.A."/>
            <person name="Helgason E."/>
            <person name="Rilstone J."/>
            <person name="Wu M."/>
            <person name="Kolonay J.F."/>
            <person name="Beanan M.J."/>
            <person name="Dodson R.J."/>
            <person name="Brinkac L.M."/>
            <person name="Gwinn M.L."/>
            <person name="DeBoy R.T."/>
            <person name="Madpu R."/>
            <person name="Daugherty S.C."/>
            <person name="Durkin A.S."/>
            <person name="Haft D.H."/>
            <person name="Nelson W.C."/>
            <person name="Peterson J.D."/>
            <person name="Pop M."/>
            <person name="Khouri H.M."/>
            <person name="Radune D."/>
            <person name="Benton J.L."/>
            <person name="Mahamoud Y."/>
            <person name="Jiang L."/>
            <person name="Hance I.R."/>
            <person name="Weidman J.F."/>
            <person name="Berry K.J."/>
            <person name="Plaut R.D."/>
            <person name="Wolf A.M."/>
            <person name="Watkins K.L."/>
            <person name="Nierman W.C."/>
            <person name="Hazen A."/>
            <person name="Cline R.T."/>
            <person name="Redmond C."/>
            <person name="Thwaite J.E."/>
            <person name="White O."/>
            <person name="Salzberg S.L."/>
            <person name="Thomason B."/>
            <person name="Friedlander A.M."/>
            <person name="Koehler T.M."/>
            <person name="Hanna P.C."/>
            <person name="Kolstoe A.-B."/>
            <person name="Fraser C.M."/>
        </authorList>
    </citation>
    <scope>NUCLEOTIDE SEQUENCE [LARGE SCALE GENOMIC DNA]</scope>
    <source>
        <strain>Ames / isolate Porton</strain>
    </source>
</reference>
<reference key="2">
    <citation type="journal article" date="2009" name="J. Bacteriol.">
        <title>The complete genome sequence of Bacillus anthracis Ames 'Ancestor'.</title>
        <authorList>
            <person name="Ravel J."/>
            <person name="Jiang L."/>
            <person name="Stanley S.T."/>
            <person name="Wilson M.R."/>
            <person name="Decker R.S."/>
            <person name="Read T.D."/>
            <person name="Worsham P."/>
            <person name="Keim P.S."/>
            <person name="Salzberg S.L."/>
            <person name="Fraser-Liggett C.M."/>
            <person name="Rasko D.A."/>
        </authorList>
    </citation>
    <scope>NUCLEOTIDE SEQUENCE [LARGE SCALE GENOMIC DNA]</scope>
    <source>
        <strain>Ames ancestor</strain>
    </source>
</reference>
<reference key="3">
    <citation type="submission" date="2004-01" db="EMBL/GenBank/DDBJ databases">
        <title>Complete genome sequence of Bacillus anthracis Sterne.</title>
        <authorList>
            <person name="Brettin T.S."/>
            <person name="Bruce D."/>
            <person name="Challacombe J.F."/>
            <person name="Gilna P."/>
            <person name="Han C."/>
            <person name="Hill K."/>
            <person name="Hitchcock P."/>
            <person name="Jackson P."/>
            <person name="Keim P."/>
            <person name="Longmire J."/>
            <person name="Lucas S."/>
            <person name="Okinaka R."/>
            <person name="Richardson P."/>
            <person name="Rubin E."/>
            <person name="Tice H."/>
        </authorList>
    </citation>
    <scope>NUCLEOTIDE SEQUENCE [LARGE SCALE GENOMIC DNA]</scope>
    <source>
        <strain>Sterne</strain>
    </source>
</reference>
<feature type="chain" id="PRO_0000162546" description="Global transcriptional regulator Spx 2">
    <location>
        <begin position="1"/>
        <end position="131"/>
    </location>
</feature>
<feature type="disulfide bond" description="Redox-active" evidence="1">
    <location>
        <begin position="10"/>
        <end position="13"/>
    </location>
</feature>
<organism>
    <name type="scientific">Bacillus anthracis</name>
    <dbReference type="NCBI Taxonomy" id="1392"/>
    <lineage>
        <taxon>Bacteria</taxon>
        <taxon>Bacillati</taxon>
        <taxon>Bacillota</taxon>
        <taxon>Bacilli</taxon>
        <taxon>Bacillales</taxon>
        <taxon>Bacillaceae</taxon>
        <taxon>Bacillus</taxon>
        <taxon>Bacillus cereus group</taxon>
    </lineage>
</organism>
<dbReference type="EMBL" id="AE016879">
    <property type="protein sequence ID" value="AAP27225.1"/>
    <property type="molecule type" value="Genomic_DNA"/>
</dbReference>
<dbReference type="EMBL" id="AE017334">
    <property type="protein sequence ID" value="AAT32564.1"/>
    <property type="molecule type" value="Genomic_DNA"/>
</dbReference>
<dbReference type="EMBL" id="AE017225">
    <property type="protein sequence ID" value="AAT55510.1"/>
    <property type="molecule type" value="Genomic_DNA"/>
</dbReference>
<dbReference type="RefSeq" id="NP_845739.1">
    <property type="nucleotide sequence ID" value="NC_003997.3"/>
</dbReference>
<dbReference type="RefSeq" id="YP_029459.1">
    <property type="nucleotide sequence ID" value="NC_005945.1"/>
</dbReference>
<dbReference type="SMR" id="Q81MW4"/>
<dbReference type="STRING" id="261594.GBAA_3456"/>
<dbReference type="DNASU" id="1085665"/>
<dbReference type="GeneID" id="45023205"/>
<dbReference type="KEGG" id="ban:BA_3456"/>
<dbReference type="KEGG" id="bar:GBAA_3456"/>
<dbReference type="KEGG" id="bat:BAS3202"/>
<dbReference type="PATRIC" id="fig|198094.11.peg.3430"/>
<dbReference type="eggNOG" id="COG1393">
    <property type="taxonomic scope" value="Bacteria"/>
</dbReference>
<dbReference type="HOGENOM" id="CLU_116644_1_1_9"/>
<dbReference type="OMA" id="HQIDYIE"/>
<dbReference type="OrthoDB" id="9794155at2"/>
<dbReference type="Proteomes" id="UP000000427">
    <property type="component" value="Chromosome"/>
</dbReference>
<dbReference type="Proteomes" id="UP000000594">
    <property type="component" value="Chromosome"/>
</dbReference>
<dbReference type="GO" id="GO:0005737">
    <property type="term" value="C:cytoplasm"/>
    <property type="evidence" value="ECO:0007669"/>
    <property type="project" value="UniProtKB-SubCell"/>
</dbReference>
<dbReference type="GO" id="GO:0045892">
    <property type="term" value="P:negative regulation of DNA-templated transcription"/>
    <property type="evidence" value="ECO:0007669"/>
    <property type="project" value="InterPro"/>
</dbReference>
<dbReference type="CDD" id="cd03032">
    <property type="entry name" value="ArsC_Spx"/>
    <property type="match status" value="1"/>
</dbReference>
<dbReference type="Gene3D" id="3.40.30.10">
    <property type="entry name" value="Glutaredoxin"/>
    <property type="match status" value="1"/>
</dbReference>
<dbReference type="HAMAP" id="MF_01132">
    <property type="entry name" value="Spx"/>
    <property type="match status" value="1"/>
</dbReference>
<dbReference type="InterPro" id="IPR006660">
    <property type="entry name" value="Arsenate_reductase-like"/>
</dbReference>
<dbReference type="InterPro" id="IPR023731">
    <property type="entry name" value="Spx"/>
</dbReference>
<dbReference type="InterPro" id="IPR036249">
    <property type="entry name" value="Thioredoxin-like_sf"/>
</dbReference>
<dbReference type="InterPro" id="IPR006504">
    <property type="entry name" value="Tscrpt_reg_Spx/MgsR"/>
</dbReference>
<dbReference type="NCBIfam" id="TIGR01617">
    <property type="entry name" value="arsC_related"/>
    <property type="match status" value="1"/>
</dbReference>
<dbReference type="NCBIfam" id="NF002459">
    <property type="entry name" value="PRK01655.1"/>
    <property type="match status" value="1"/>
</dbReference>
<dbReference type="NCBIfam" id="NF009210">
    <property type="entry name" value="PRK12559.1"/>
    <property type="match status" value="1"/>
</dbReference>
<dbReference type="PANTHER" id="PTHR30041">
    <property type="entry name" value="ARSENATE REDUCTASE"/>
    <property type="match status" value="1"/>
</dbReference>
<dbReference type="PANTHER" id="PTHR30041:SF7">
    <property type="entry name" value="GLOBAL TRANSCRIPTIONAL REGULATOR SPX"/>
    <property type="match status" value="1"/>
</dbReference>
<dbReference type="Pfam" id="PF03960">
    <property type="entry name" value="ArsC"/>
    <property type="match status" value="1"/>
</dbReference>
<dbReference type="SUPFAM" id="SSF52833">
    <property type="entry name" value="Thioredoxin-like"/>
    <property type="match status" value="1"/>
</dbReference>
<dbReference type="PROSITE" id="PS51353">
    <property type="entry name" value="ARSC"/>
    <property type="match status" value="1"/>
</dbReference>